<reference key="1">
    <citation type="journal article" date="2005" name="Science">
        <title>The transcriptional landscape of the mammalian genome.</title>
        <authorList>
            <person name="Carninci P."/>
            <person name="Kasukawa T."/>
            <person name="Katayama S."/>
            <person name="Gough J."/>
            <person name="Frith M.C."/>
            <person name="Maeda N."/>
            <person name="Oyama R."/>
            <person name="Ravasi T."/>
            <person name="Lenhard B."/>
            <person name="Wells C."/>
            <person name="Kodzius R."/>
            <person name="Shimokawa K."/>
            <person name="Bajic V.B."/>
            <person name="Brenner S.E."/>
            <person name="Batalov S."/>
            <person name="Forrest A.R."/>
            <person name="Zavolan M."/>
            <person name="Davis M.J."/>
            <person name="Wilming L.G."/>
            <person name="Aidinis V."/>
            <person name="Allen J.E."/>
            <person name="Ambesi-Impiombato A."/>
            <person name="Apweiler R."/>
            <person name="Aturaliya R.N."/>
            <person name="Bailey T.L."/>
            <person name="Bansal M."/>
            <person name="Baxter L."/>
            <person name="Beisel K.W."/>
            <person name="Bersano T."/>
            <person name="Bono H."/>
            <person name="Chalk A.M."/>
            <person name="Chiu K.P."/>
            <person name="Choudhary V."/>
            <person name="Christoffels A."/>
            <person name="Clutterbuck D.R."/>
            <person name="Crowe M.L."/>
            <person name="Dalla E."/>
            <person name="Dalrymple B.P."/>
            <person name="de Bono B."/>
            <person name="Della Gatta G."/>
            <person name="di Bernardo D."/>
            <person name="Down T."/>
            <person name="Engstrom P."/>
            <person name="Fagiolini M."/>
            <person name="Faulkner G."/>
            <person name="Fletcher C.F."/>
            <person name="Fukushima T."/>
            <person name="Furuno M."/>
            <person name="Futaki S."/>
            <person name="Gariboldi M."/>
            <person name="Georgii-Hemming P."/>
            <person name="Gingeras T.R."/>
            <person name="Gojobori T."/>
            <person name="Green R.E."/>
            <person name="Gustincich S."/>
            <person name="Harbers M."/>
            <person name="Hayashi Y."/>
            <person name="Hensch T.K."/>
            <person name="Hirokawa N."/>
            <person name="Hill D."/>
            <person name="Huminiecki L."/>
            <person name="Iacono M."/>
            <person name="Ikeo K."/>
            <person name="Iwama A."/>
            <person name="Ishikawa T."/>
            <person name="Jakt M."/>
            <person name="Kanapin A."/>
            <person name="Katoh M."/>
            <person name="Kawasawa Y."/>
            <person name="Kelso J."/>
            <person name="Kitamura H."/>
            <person name="Kitano H."/>
            <person name="Kollias G."/>
            <person name="Krishnan S.P."/>
            <person name="Kruger A."/>
            <person name="Kummerfeld S.K."/>
            <person name="Kurochkin I.V."/>
            <person name="Lareau L.F."/>
            <person name="Lazarevic D."/>
            <person name="Lipovich L."/>
            <person name="Liu J."/>
            <person name="Liuni S."/>
            <person name="McWilliam S."/>
            <person name="Madan Babu M."/>
            <person name="Madera M."/>
            <person name="Marchionni L."/>
            <person name="Matsuda H."/>
            <person name="Matsuzawa S."/>
            <person name="Miki H."/>
            <person name="Mignone F."/>
            <person name="Miyake S."/>
            <person name="Morris K."/>
            <person name="Mottagui-Tabar S."/>
            <person name="Mulder N."/>
            <person name="Nakano N."/>
            <person name="Nakauchi H."/>
            <person name="Ng P."/>
            <person name="Nilsson R."/>
            <person name="Nishiguchi S."/>
            <person name="Nishikawa S."/>
            <person name="Nori F."/>
            <person name="Ohara O."/>
            <person name="Okazaki Y."/>
            <person name="Orlando V."/>
            <person name="Pang K.C."/>
            <person name="Pavan W.J."/>
            <person name="Pavesi G."/>
            <person name="Pesole G."/>
            <person name="Petrovsky N."/>
            <person name="Piazza S."/>
            <person name="Reed J."/>
            <person name="Reid J.F."/>
            <person name="Ring B.Z."/>
            <person name="Ringwald M."/>
            <person name="Rost B."/>
            <person name="Ruan Y."/>
            <person name="Salzberg S.L."/>
            <person name="Sandelin A."/>
            <person name="Schneider C."/>
            <person name="Schoenbach C."/>
            <person name="Sekiguchi K."/>
            <person name="Semple C.A."/>
            <person name="Seno S."/>
            <person name="Sessa L."/>
            <person name="Sheng Y."/>
            <person name="Shibata Y."/>
            <person name="Shimada H."/>
            <person name="Shimada K."/>
            <person name="Silva D."/>
            <person name="Sinclair B."/>
            <person name="Sperling S."/>
            <person name="Stupka E."/>
            <person name="Sugiura K."/>
            <person name="Sultana R."/>
            <person name="Takenaka Y."/>
            <person name="Taki K."/>
            <person name="Tammoja K."/>
            <person name="Tan S.L."/>
            <person name="Tang S."/>
            <person name="Taylor M.S."/>
            <person name="Tegner J."/>
            <person name="Teichmann S.A."/>
            <person name="Ueda H.R."/>
            <person name="van Nimwegen E."/>
            <person name="Verardo R."/>
            <person name="Wei C.L."/>
            <person name="Yagi K."/>
            <person name="Yamanishi H."/>
            <person name="Zabarovsky E."/>
            <person name="Zhu S."/>
            <person name="Zimmer A."/>
            <person name="Hide W."/>
            <person name="Bult C."/>
            <person name="Grimmond S.M."/>
            <person name="Teasdale R.D."/>
            <person name="Liu E.T."/>
            <person name="Brusic V."/>
            <person name="Quackenbush J."/>
            <person name="Wahlestedt C."/>
            <person name="Mattick J.S."/>
            <person name="Hume D.A."/>
            <person name="Kai C."/>
            <person name="Sasaki D."/>
            <person name="Tomaru Y."/>
            <person name="Fukuda S."/>
            <person name="Kanamori-Katayama M."/>
            <person name="Suzuki M."/>
            <person name="Aoki J."/>
            <person name="Arakawa T."/>
            <person name="Iida J."/>
            <person name="Imamura K."/>
            <person name="Itoh M."/>
            <person name="Kato T."/>
            <person name="Kawaji H."/>
            <person name="Kawagashira N."/>
            <person name="Kawashima T."/>
            <person name="Kojima M."/>
            <person name="Kondo S."/>
            <person name="Konno H."/>
            <person name="Nakano K."/>
            <person name="Ninomiya N."/>
            <person name="Nishio T."/>
            <person name="Okada M."/>
            <person name="Plessy C."/>
            <person name="Shibata K."/>
            <person name="Shiraki T."/>
            <person name="Suzuki S."/>
            <person name="Tagami M."/>
            <person name="Waki K."/>
            <person name="Watahiki A."/>
            <person name="Okamura-Oho Y."/>
            <person name="Suzuki H."/>
            <person name="Kawai J."/>
            <person name="Hayashizaki Y."/>
        </authorList>
    </citation>
    <scope>NUCLEOTIDE SEQUENCE [LARGE SCALE MRNA]</scope>
    <source>
        <strain>C57BL/6J</strain>
        <tissue>Hippocampus</tissue>
    </source>
</reference>
<reference key="2">
    <citation type="journal article" date="2004" name="Genome Res.">
        <title>The status, quality, and expansion of the NIH full-length cDNA project: the Mammalian Gene Collection (MGC).</title>
        <authorList>
            <consortium name="The MGC Project Team"/>
        </authorList>
    </citation>
    <scope>NUCLEOTIDE SEQUENCE [LARGE SCALE MRNA]</scope>
    <source>
        <strain>C57BL/6J</strain>
        <tissue>Brain</tissue>
    </source>
</reference>
<reference key="3">
    <citation type="journal article" date="2003" name="DNA Res.">
        <title>Prediction of the coding sequences of mouse homologues of KIAA gene: III. The complete nucleotide sequences of 500 mouse KIAA-homologous cDNAs identified by screening of terminal sequences of cDNA clones randomly sampled from size-fractionated libraries.</title>
        <authorList>
            <person name="Okazaki N."/>
            <person name="Kikuno R."/>
            <person name="Ohara R."/>
            <person name="Inamoto S."/>
            <person name="Koseki H."/>
            <person name="Hiraoka S."/>
            <person name="Saga Y."/>
            <person name="Nagase T."/>
            <person name="Ohara O."/>
            <person name="Koga H."/>
        </authorList>
    </citation>
    <scope>NUCLEOTIDE SEQUENCE [LARGE SCALE MRNA] OF 61-581</scope>
    <source>
        <tissue>Embryonic tail</tissue>
    </source>
</reference>
<reference key="4">
    <citation type="journal article" date="2010" name="Cell">
        <title>A tissue-specific atlas of mouse protein phosphorylation and expression.</title>
        <authorList>
            <person name="Huttlin E.L."/>
            <person name="Jedrychowski M.P."/>
            <person name="Elias J.E."/>
            <person name="Goswami T."/>
            <person name="Rad R."/>
            <person name="Beausoleil S.A."/>
            <person name="Villen J."/>
            <person name="Haas W."/>
            <person name="Sowa M.E."/>
            <person name="Gygi S.P."/>
        </authorList>
    </citation>
    <scope>IDENTIFICATION BY MASS SPECTROMETRY [LARGE SCALE ANALYSIS]</scope>
    <source>
        <tissue>Brain</tissue>
        <tissue>Heart</tissue>
        <tissue>Kidney</tissue>
        <tissue>Liver</tissue>
        <tissue>Lung</tissue>
        <tissue>Pancreas</tissue>
        <tissue>Spleen</tissue>
        <tissue>Testis</tissue>
    </source>
</reference>
<protein>
    <recommendedName>
        <fullName>Leucine-rich repeat-containing protein 47</fullName>
    </recommendedName>
</protein>
<accession>Q505F5</accession>
<accession>Q3U380</accession>
<accession>Q6ZPW2</accession>
<accession>Q9CUZ0</accession>
<gene>
    <name type="primary">Lrrc47</name>
    <name type="synonym">Kiaa1185</name>
</gene>
<feature type="chain" id="PRO_0000223927" description="Leucine-rich repeat-containing protein 47">
    <location>
        <begin position="1"/>
        <end position="581"/>
    </location>
</feature>
<feature type="repeat" description="LRR 1">
    <location>
        <begin position="78"/>
        <end position="97"/>
    </location>
</feature>
<feature type="repeat" description="LRR 2">
    <location>
        <begin position="102"/>
        <end position="123"/>
    </location>
</feature>
<feature type="repeat" description="LRR 3">
    <location>
        <begin position="132"/>
        <end position="154"/>
    </location>
</feature>
<feature type="repeat" description="LRR 4">
    <location>
        <begin position="156"/>
        <end position="177"/>
    </location>
</feature>
<feature type="repeat" description="LRR 5">
    <location>
        <begin position="182"/>
        <end position="204"/>
    </location>
</feature>
<feature type="repeat" description="LRR 6">
    <location>
        <begin position="205"/>
        <end position="227"/>
    </location>
</feature>
<feature type="repeat" description="LRR 7">
    <location>
        <begin position="228"/>
        <end position="248"/>
    </location>
</feature>
<feature type="region of interest" description="Disordered" evidence="3">
    <location>
        <begin position="262"/>
        <end position="301"/>
    </location>
</feature>
<feature type="coiled-coil region" evidence="2">
    <location>
        <begin position="401"/>
        <end position="436"/>
    </location>
</feature>
<feature type="compositionally biased region" description="Basic and acidic residues" evidence="3">
    <location>
        <begin position="271"/>
        <end position="280"/>
    </location>
</feature>
<feature type="modified residue" description="Phosphoserine" evidence="1">
    <location>
        <position position="314"/>
    </location>
</feature>
<feature type="modified residue" description="Phosphoserine" evidence="1">
    <location>
        <position position="430"/>
    </location>
</feature>
<feature type="modified residue" description="Phosphoserine" evidence="1">
    <location>
        <position position="519"/>
    </location>
</feature>
<feature type="sequence conflict" description="In Ref. 1; BAE32909." evidence="4" ref="1">
    <original>H</original>
    <variation>Y</variation>
    <location>
        <position position="312"/>
    </location>
</feature>
<feature type="sequence conflict" description="In Ref. 3; BAC98116." evidence="4" ref="3">
    <original>S</original>
    <variation>N</variation>
    <location>
        <position position="487"/>
    </location>
</feature>
<proteinExistence type="evidence at protein level"/>
<name>LRC47_MOUSE</name>
<evidence type="ECO:0000250" key="1">
    <source>
        <dbReference type="UniProtKB" id="Q8N1G4"/>
    </source>
</evidence>
<evidence type="ECO:0000255" key="2"/>
<evidence type="ECO:0000256" key="3">
    <source>
        <dbReference type="SAM" id="MobiDB-lite"/>
    </source>
</evidence>
<evidence type="ECO:0000305" key="4"/>
<sequence length="581" mass="63590">MAAAAMAVSEAWPELELAERERRRELLLTGPGLEERVKAAGGRLPPRLFTLPLLHYLEVSGCGSLRAPGPGLAQGLPQLHSLVLRRNALGPGLSPELGPLPALRVLDLSGNALETLPPGEGLGPAEPPGLPQLQSLNLSGNRLRELPADLARCAPRLQSLNLTGNRLDAFPPELFRPGALPLLSELAAADNCLRELSPDIAHLASLKTLDLSNNQLTEIPAELADCPKLKEINFRGNRLRDKRLEKMVGGCQTKSILEYLRAGGRGGRSKGRQEASEKEDRKKRRERKQHRESGEGEEEVADSARLMLKVLHVSENPTPLTVRVSPEVKDVRPYIVGAIVRGMDLQPGNALRRFLNSQTKLHDDLCEKRTAATIATHDLQAVRGPLLYAARPPEDLKIVPLGRKEAKAKELVRQLQLEAEEQRKQKKRQSVSGLHRYLHLLDGKENYPCLVDAEGDVISFPPITNSEKTKIKKTTCNLFLEVTSATSLQLCKDIMDSLILRMAELSKSTSENKEEDMLSGTEADAGCGLSDPNLTLSSGKDGQCPLVVEQVRVVDLEGSLKVVYPSKTDLITLPPHVTVVR</sequence>
<keyword id="KW-0175">Coiled coil</keyword>
<keyword id="KW-0433">Leucine-rich repeat</keyword>
<keyword id="KW-0597">Phosphoprotein</keyword>
<keyword id="KW-1185">Reference proteome</keyword>
<keyword id="KW-0677">Repeat</keyword>
<organism>
    <name type="scientific">Mus musculus</name>
    <name type="common">Mouse</name>
    <dbReference type="NCBI Taxonomy" id="10090"/>
    <lineage>
        <taxon>Eukaryota</taxon>
        <taxon>Metazoa</taxon>
        <taxon>Chordata</taxon>
        <taxon>Craniata</taxon>
        <taxon>Vertebrata</taxon>
        <taxon>Euteleostomi</taxon>
        <taxon>Mammalia</taxon>
        <taxon>Eutheria</taxon>
        <taxon>Euarchontoglires</taxon>
        <taxon>Glires</taxon>
        <taxon>Rodentia</taxon>
        <taxon>Myomorpha</taxon>
        <taxon>Muroidea</taxon>
        <taxon>Muridae</taxon>
        <taxon>Murinae</taxon>
        <taxon>Mus</taxon>
        <taxon>Mus</taxon>
    </lineage>
</organism>
<dbReference type="EMBL" id="AK013512">
    <property type="protein sequence ID" value="BAB28889.1"/>
    <property type="molecule type" value="mRNA"/>
</dbReference>
<dbReference type="EMBL" id="AK154897">
    <property type="protein sequence ID" value="BAE32909.1"/>
    <property type="molecule type" value="mRNA"/>
</dbReference>
<dbReference type="EMBL" id="BC094573">
    <property type="protein sequence ID" value="AAH94573.1"/>
    <property type="molecule type" value="mRNA"/>
</dbReference>
<dbReference type="EMBL" id="AK129306">
    <property type="protein sequence ID" value="BAC98116.1"/>
    <property type="molecule type" value="mRNA"/>
</dbReference>
<dbReference type="CCDS" id="CCDS19006.1"/>
<dbReference type="RefSeq" id="NP_957678.1">
    <property type="nucleotide sequence ID" value="NM_201226.1"/>
</dbReference>
<dbReference type="SMR" id="Q505F5"/>
<dbReference type="BioGRID" id="215663">
    <property type="interactions" value="14"/>
</dbReference>
<dbReference type="FunCoup" id="Q505F5">
    <property type="interactions" value="626"/>
</dbReference>
<dbReference type="IntAct" id="Q505F5">
    <property type="interactions" value="6"/>
</dbReference>
<dbReference type="MINT" id="Q505F5"/>
<dbReference type="STRING" id="10090.ENSMUSP00000030894"/>
<dbReference type="GlyGen" id="Q505F5">
    <property type="glycosylation" value="2 sites, 1 N-linked glycan (1 site), 1 O-linked glycan (1 site)"/>
</dbReference>
<dbReference type="iPTMnet" id="Q505F5"/>
<dbReference type="PhosphoSitePlus" id="Q505F5"/>
<dbReference type="SwissPalm" id="Q505F5"/>
<dbReference type="REPRODUCTION-2DPAGE" id="Q505F5"/>
<dbReference type="jPOST" id="Q505F5"/>
<dbReference type="PaxDb" id="10090-ENSMUSP00000133124"/>
<dbReference type="ProteomicsDB" id="252670"/>
<dbReference type="Pumba" id="Q505F5"/>
<dbReference type="Antibodypedia" id="1623">
    <property type="antibodies" value="31 antibodies from 13 providers"/>
</dbReference>
<dbReference type="DNASU" id="72946"/>
<dbReference type="Ensembl" id="ENSMUST00000030894.15">
    <property type="protein sequence ID" value="ENSMUSP00000030894.9"/>
    <property type="gene ID" value="ENSMUSG00000029028.15"/>
</dbReference>
<dbReference type="GeneID" id="72946"/>
<dbReference type="KEGG" id="mmu:72946"/>
<dbReference type="UCSC" id="uc008way.1">
    <property type="organism name" value="mouse"/>
</dbReference>
<dbReference type="AGR" id="MGI:1920196"/>
<dbReference type="CTD" id="57470"/>
<dbReference type="MGI" id="MGI:1920196">
    <property type="gene designation" value="Lrrc47"/>
</dbReference>
<dbReference type="VEuPathDB" id="HostDB:ENSMUSG00000029028"/>
<dbReference type="eggNOG" id="KOG2472">
    <property type="taxonomic scope" value="Eukaryota"/>
</dbReference>
<dbReference type="GeneTree" id="ENSGT00530000063489"/>
<dbReference type="HOGENOM" id="CLU_034522_0_0_1"/>
<dbReference type="InParanoid" id="Q505F5"/>
<dbReference type="OMA" id="YDVKPPT"/>
<dbReference type="OrthoDB" id="67933at2759"/>
<dbReference type="PhylomeDB" id="Q505F5"/>
<dbReference type="BioGRID-ORCS" id="72946">
    <property type="hits" value="1 hit in 77 CRISPR screens"/>
</dbReference>
<dbReference type="PRO" id="PR:Q505F5"/>
<dbReference type="Proteomes" id="UP000000589">
    <property type="component" value="Chromosome 4"/>
</dbReference>
<dbReference type="RNAct" id="Q505F5">
    <property type="molecule type" value="protein"/>
</dbReference>
<dbReference type="Bgee" id="ENSMUSG00000029028">
    <property type="expression patterns" value="Expressed in secondary oocyte and 233 other cell types or tissues"/>
</dbReference>
<dbReference type="ExpressionAtlas" id="Q505F5">
    <property type="expression patterns" value="baseline and differential"/>
</dbReference>
<dbReference type="GO" id="GO:0004826">
    <property type="term" value="F:phenylalanine-tRNA ligase activity"/>
    <property type="evidence" value="ECO:0007669"/>
    <property type="project" value="InterPro"/>
</dbReference>
<dbReference type="GO" id="GO:0003723">
    <property type="term" value="F:RNA binding"/>
    <property type="evidence" value="ECO:0007669"/>
    <property type="project" value="InterPro"/>
</dbReference>
<dbReference type="GO" id="GO:0006432">
    <property type="term" value="P:phenylalanyl-tRNA aminoacylation"/>
    <property type="evidence" value="ECO:0007669"/>
    <property type="project" value="InterPro"/>
</dbReference>
<dbReference type="FunFam" id="3.80.10.10:FF:000342">
    <property type="entry name" value="Leucine rich repeat containing 47"/>
    <property type="match status" value="1"/>
</dbReference>
<dbReference type="Gene3D" id="3.50.40.10">
    <property type="entry name" value="Phenylalanyl-trna Synthetase, Chain B, domain 3"/>
    <property type="match status" value="1"/>
</dbReference>
<dbReference type="Gene3D" id="3.80.10.10">
    <property type="entry name" value="Ribonuclease Inhibitor"/>
    <property type="match status" value="2"/>
</dbReference>
<dbReference type="InterPro" id="IPR005146">
    <property type="entry name" value="B3/B4_tRNA-bd"/>
</dbReference>
<dbReference type="InterPro" id="IPR001611">
    <property type="entry name" value="Leu-rich_rpt"/>
</dbReference>
<dbReference type="InterPro" id="IPR025875">
    <property type="entry name" value="Leu-rich_rpt_4"/>
</dbReference>
<dbReference type="InterPro" id="IPR003591">
    <property type="entry name" value="Leu-rich_rpt_typical-subtyp"/>
</dbReference>
<dbReference type="InterPro" id="IPR032675">
    <property type="entry name" value="LRR_dom_sf"/>
</dbReference>
<dbReference type="InterPro" id="IPR045060">
    <property type="entry name" value="Phe-tRNA-ligase_IIc_bsu"/>
</dbReference>
<dbReference type="InterPro" id="IPR020825">
    <property type="entry name" value="Phe-tRNA_synthase-like_B3/B4"/>
</dbReference>
<dbReference type="PANTHER" id="PTHR10947:SF3">
    <property type="entry name" value="LEUCINE-RICH REPEAT-CONTAINING PROTEIN 47"/>
    <property type="match status" value="1"/>
</dbReference>
<dbReference type="PANTHER" id="PTHR10947">
    <property type="entry name" value="PHENYLALANYL-TRNA SYNTHETASE BETA CHAIN AND LEUCINE-RICH REPEAT-CONTAINING PROTEIN 47"/>
    <property type="match status" value="1"/>
</dbReference>
<dbReference type="Pfam" id="PF00560">
    <property type="entry name" value="LRR_1"/>
    <property type="match status" value="1"/>
</dbReference>
<dbReference type="Pfam" id="PF12799">
    <property type="entry name" value="LRR_4"/>
    <property type="match status" value="1"/>
</dbReference>
<dbReference type="Pfam" id="PF13855">
    <property type="entry name" value="LRR_8"/>
    <property type="match status" value="1"/>
</dbReference>
<dbReference type="PRINTS" id="PR00019">
    <property type="entry name" value="LEURICHRPT"/>
</dbReference>
<dbReference type="SMART" id="SM00873">
    <property type="entry name" value="B3_4"/>
    <property type="match status" value="1"/>
</dbReference>
<dbReference type="SMART" id="SM00364">
    <property type="entry name" value="LRR_BAC"/>
    <property type="match status" value="5"/>
</dbReference>
<dbReference type="SMART" id="SM00369">
    <property type="entry name" value="LRR_TYP"/>
    <property type="match status" value="5"/>
</dbReference>
<dbReference type="SUPFAM" id="SSF52058">
    <property type="entry name" value="L domain-like"/>
    <property type="match status" value="1"/>
</dbReference>
<dbReference type="PROSITE" id="PS51450">
    <property type="entry name" value="LRR"/>
    <property type="match status" value="6"/>
</dbReference>